<accession>Q7CQC4</accession>
<organism>
    <name type="scientific">Salmonella typhimurium (strain LT2 / SGSC1412 / ATCC 700720)</name>
    <dbReference type="NCBI Taxonomy" id="99287"/>
    <lineage>
        <taxon>Bacteria</taxon>
        <taxon>Pseudomonadati</taxon>
        <taxon>Pseudomonadota</taxon>
        <taxon>Gammaproteobacteria</taxon>
        <taxon>Enterobacterales</taxon>
        <taxon>Enterobacteriaceae</taxon>
        <taxon>Salmonella</taxon>
    </lineage>
</organism>
<evidence type="ECO:0000255" key="1">
    <source>
        <dbReference type="HAMAP-Rule" id="MF_01589"/>
    </source>
</evidence>
<evidence type="ECO:0000269" key="2">
    <source>
    </source>
</evidence>
<evidence type="ECO:0000303" key="3">
    <source>
    </source>
</evidence>
<evidence type="ECO:0000305" key="4">
    <source>
    </source>
</evidence>
<name>CMOA_SALTY</name>
<keyword id="KW-1185">Reference proteome</keyword>
<keyword id="KW-0949">S-adenosyl-L-methionine</keyword>
<keyword id="KW-0808">Transferase</keyword>
<proteinExistence type="inferred from homology"/>
<reference key="1">
    <citation type="journal article" date="2001" name="Nature">
        <title>Complete genome sequence of Salmonella enterica serovar Typhimurium LT2.</title>
        <authorList>
            <person name="McClelland M."/>
            <person name="Sanderson K.E."/>
            <person name="Spieth J."/>
            <person name="Clifton S.W."/>
            <person name="Latreille P."/>
            <person name="Courtney L."/>
            <person name="Porwollik S."/>
            <person name="Ali J."/>
            <person name="Dante M."/>
            <person name="Du F."/>
            <person name="Hou S."/>
            <person name="Layman D."/>
            <person name="Leonard S."/>
            <person name="Nguyen C."/>
            <person name="Scott K."/>
            <person name="Holmes A."/>
            <person name="Grewal N."/>
            <person name="Mulvaney E."/>
            <person name="Ryan E."/>
            <person name="Sun H."/>
            <person name="Florea L."/>
            <person name="Miller W."/>
            <person name="Stoneking T."/>
            <person name="Nhan M."/>
            <person name="Waterston R."/>
            <person name="Wilson R.K."/>
        </authorList>
    </citation>
    <scope>NUCLEOTIDE SEQUENCE [LARGE SCALE GENOMIC DNA]</scope>
    <source>
        <strain>LT2 / SGSC1412 / ATCC 700720</strain>
    </source>
</reference>
<reference key="2">
    <citation type="journal article" date="2004" name="RNA">
        <title>The modified wobble nucleoside uridine-5-oxyacetic acid in tRNAPro(cmo5UGG) promotes reading of all four proline codons in vivo.</title>
        <authorList>
            <person name="Naesvall S.J."/>
            <person name="Chen P."/>
            <person name="Bjoerk G.R."/>
        </authorList>
    </citation>
    <scope>DISRUPTION PHENOTYPE</scope>
    <source>
        <strain>LT2</strain>
    </source>
</reference>
<comment type="function">
    <text evidence="1">Catalyzes the conversion of S-adenosyl-L-methionine (SAM) to carboxy-S-adenosyl-L-methionine (Cx-SAM).</text>
</comment>
<comment type="catalytic activity">
    <reaction evidence="1">
        <text>prephenate + S-adenosyl-L-methionine = carboxy-S-adenosyl-L-methionine + 3-phenylpyruvate + H2O</text>
        <dbReference type="Rhea" id="RHEA:51692"/>
        <dbReference type="ChEBI" id="CHEBI:15377"/>
        <dbReference type="ChEBI" id="CHEBI:18005"/>
        <dbReference type="ChEBI" id="CHEBI:29934"/>
        <dbReference type="ChEBI" id="CHEBI:59789"/>
        <dbReference type="ChEBI" id="CHEBI:134278"/>
    </reaction>
</comment>
<comment type="subunit">
    <text evidence="1">Homodimer.</text>
</comment>
<comment type="disruption phenotype">
    <text evidence="2">Deletion mutant shows accumulation of 5-methoxyuridine (mo5U34) and 5-hydroxyuridine (ho5U34) in tRNA.</text>
</comment>
<comment type="similarity">
    <text evidence="1">Belongs to the class I-like SAM-binding methyltransferase superfamily. Cx-SAM synthase family.</text>
</comment>
<comment type="caution">
    <text evidence="4">Was originally thought to be a transferase that mediates the conversion of mo5U(34) to cmo5U(34) in tRNAs.</text>
</comment>
<gene>
    <name evidence="1 3" type="primary">cmoA</name>
    <name type="ordered locus">STM1905</name>
</gene>
<feature type="chain" id="PRO_0000314374" description="Carboxy-S-adenosyl-L-methionine synthase">
    <location>
        <begin position="1"/>
        <end position="247"/>
    </location>
</feature>
<feature type="binding site" evidence="1">
    <location>
        <position position="39"/>
    </location>
    <ligand>
        <name>S-adenosyl-L-methionine</name>
        <dbReference type="ChEBI" id="CHEBI:59789"/>
    </ligand>
</feature>
<feature type="binding site" evidence="1">
    <location>
        <begin position="64"/>
        <end position="66"/>
    </location>
    <ligand>
        <name>S-adenosyl-L-methionine</name>
        <dbReference type="ChEBI" id="CHEBI:59789"/>
    </ligand>
</feature>
<feature type="binding site" evidence="1">
    <location>
        <begin position="89"/>
        <end position="90"/>
    </location>
    <ligand>
        <name>S-adenosyl-L-methionine</name>
        <dbReference type="ChEBI" id="CHEBI:59789"/>
    </ligand>
</feature>
<feature type="binding site" evidence="1">
    <location>
        <begin position="117"/>
        <end position="118"/>
    </location>
    <ligand>
        <name>S-adenosyl-L-methionine</name>
        <dbReference type="ChEBI" id="CHEBI:59789"/>
    </ligand>
</feature>
<feature type="binding site" evidence="1">
    <location>
        <position position="132"/>
    </location>
    <ligand>
        <name>S-adenosyl-L-methionine</name>
        <dbReference type="ChEBI" id="CHEBI:59789"/>
    </ligand>
</feature>
<feature type="binding site" evidence="1">
    <location>
        <position position="199"/>
    </location>
    <ligand>
        <name>S-adenosyl-L-methionine</name>
        <dbReference type="ChEBI" id="CHEBI:59789"/>
    </ligand>
</feature>
<dbReference type="EC" id="2.1.3.-" evidence="1"/>
<dbReference type="EMBL" id="AE006468">
    <property type="protein sequence ID" value="AAL20821.1"/>
    <property type="molecule type" value="Genomic_DNA"/>
</dbReference>
<dbReference type="RefSeq" id="WP_000019609.1">
    <property type="nucleotide sequence ID" value="NC_003197.2"/>
</dbReference>
<dbReference type="SMR" id="Q7CQC4"/>
<dbReference type="STRING" id="99287.STM1905"/>
<dbReference type="PaxDb" id="99287-STM1905"/>
<dbReference type="KEGG" id="stm:STM1905"/>
<dbReference type="PATRIC" id="fig|99287.12.peg.2020"/>
<dbReference type="HOGENOM" id="CLU_078475_0_0_6"/>
<dbReference type="OMA" id="QMIELYY"/>
<dbReference type="PhylomeDB" id="Q7CQC4"/>
<dbReference type="BioCyc" id="SENT99287:STM1905-MONOMER"/>
<dbReference type="Proteomes" id="UP000001014">
    <property type="component" value="Chromosome"/>
</dbReference>
<dbReference type="GO" id="GO:0016743">
    <property type="term" value="F:carboxyl- or carbamoyltransferase activity"/>
    <property type="evidence" value="ECO:0007669"/>
    <property type="project" value="UniProtKB-UniRule"/>
</dbReference>
<dbReference type="GO" id="GO:1904047">
    <property type="term" value="F:S-adenosyl-L-methionine binding"/>
    <property type="evidence" value="ECO:0007669"/>
    <property type="project" value="UniProtKB-UniRule"/>
</dbReference>
<dbReference type="GO" id="GO:0002098">
    <property type="term" value="P:tRNA wobble uridine modification"/>
    <property type="evidence" value="ECO:0007669"/>
    <property type="project" value="InterPro"/>
</dbReference>
<dbReference type="CDD" id="cd02440">
    <property type="entry name" value="AdoMet_MTases"/>
    <property type="match status" value="1"/>
</dbReference>
<dbReference type="FunFam" id="3.40.50.150:FF:000030">
    <property type="entry name" value="Carboxy-S-adenosyl-L-methionine synthase"/>
    <property type="match status" value="1"/>
</dbReference>
<dbReference type="Gene3D" id="3.40.50.150">
    <property type="entry name" value="Vaccinia Virus protein VP39"/>
    <property type="match status" value="1"/>
</dbReference>
<dbReference type="HAMAP" id="MF_01589">
    <property type="entry name" value="Cx_SAM_synthase"/>
    <property type="match status" value="1"/>
</dbReference>
<dbReference type="InterPro" id="IPR005271">
    <property type="entry name" value="CmoA"/>
</dbReference>
<dbReference type="InterPro" id="IPR041698">
    <property type="entry name" value="Methyltransf_25"/>
</dbReference>
<dbReference type="InterPro" id="IPR029063">
    <property type="entry name" value="SAM-dependent_MTases_sf"/>
</dbReference>
<dbReference type="NCBIfam" id="TIGR00740">
    <property type="entry name" value="carboxy-S-adenosyl-L-methionine synthase CmoA"/>
    <property type="match status" value="1"/>
</dbReference>
<dbReference type="NCBIfam" id="NF011995">
    <property type="entry name" value="PRK15451.1"/>
    <property type="match status" value="1"/>
</dbReference>
<dbReference type="PANTHER" id="PTHR43861:SF2">
    <property type="entry name" value="CARBOXY-S-ADENOSYL-L-METHIONINE SYNTHASE"/>
    <property type="match status" value="1"/>
</dbReference>
<dbReference type="PANTHER" id="PTHR43861">
    <property type="entry name" value="TRANS-ACONITATE 2-METHYLTRANSFERASE-RELATED"/>
    <property type="match status" value="1"/>
</dbReference>
<dbReference type="Pfam" id="PF13649">
    <property type="entry name" value="Methyltransf_25"/>
    <property type="match status" value="1"/>
</dbReference>
<dbReference type="PIRSF" id="PIRSF006325">
    <property type="entry name" value="MeTrfase_bac"/>
    <property type="match status" value="1"/>
</dbReference>
<dbReference type="SUPFAM" id="SSF53335">
    <property type="entry name" value="S-adenosyl-L-methionine-dependent methyltransferases"/>
    <property type="match status" value="1"/>
</dbReference>
<sequence>MSHRDTLFSAPIARLGDWTFDERVAEVFPDMIQRSVPGYSNIISMIGMLAERFVQPNTQVYDLGCSLGAATLSVRRNIRHEHCRIIAVDNSPAMIERCRRHIDAYKAPTPVEVVEGDIRDITIENASMVVLNFTLQFLEPAERQALLDKIYLGLNPGGALVLSEKFSFEDAKVGELLFNMHHDFKRANGYSELEISQKRSMLENVMLTDSVETHKARLRQAGFEHSELWFQCFNFGSLVALKAGVAA</sequence>
<protein>
    <recommendedName>
        <fullName evidence="1">Carboxy-S-adenosyl-L-methionine synthase</fullName>
        <shortName evidence="1">Cx-SAM synthase</shortName>
        <ecNumber evidence="1">2.1.3.-</ecNumber>
    </recommendedName>
</protein>